<accession>P0DMF4</accession>
<dbReference type="GO" id="GO:0005576">
    <property type="term" value="C:extracellular region"/>
    <property type="evidence" value="ECO:0007669"/>
    <property type="project" value="UniProtKB-SubCell"/>
</dbReference>
<dbReference type="GO" id="GO:0050688">
    <property type="term" value="P:regulation of defense response to virus"/>
    <property type="evidence" value="ECO:0007669"/>
    <property type="project" value="UniProtKB-KW"/>
</dbReference>
<sequence>MKTQTALFSFFLVLLLVATQTEGGILDAITGLLGKRALRNQNFVDYAFDPSLSAADWRALETLLEEY</sequence>
<keyword id="KW-0027">Amidation</keyword>
<keyword id="KW-0929">Antimicrobial</keyword>
<keyword id="KW-0930">Antiviral protein</keyword>
<keyword id="KW-0964">Secreted</keyword>
<keyword id="KW-0732">Signal</keyword>
<comment type="function">
    <text evidence="1">Antimicrobial peptide.</text>
</comment>
<comment type="subcellular location">
    <subcellularLocation>
        <location evidence="1">Secreted</location>
    </subcellularLocation>
</comment>
<comment type="tissue specificity">
    <text evidence="4">Expressed by the venom gland.</text>
</comment>
<comment type="miscellaneous">
    <text evidence="5">Shows a low ability to inhibit hepatitis C virus (HCV) infection in Huh7.5.1 cells.</text>
</comment>
<comment type="similarity">
    <text evidence="4">Belongs to the non-disulfide-bridged peptide (NDBP) superfamily. Short antimicrobial peptide (group 4) family.</text>
</comment>
<proteinExistence type="inferred from homology"/>
<reference key="1">
    <citation type="journal article" date="2013" name="Biomaterials">
        <title>Design of histidine-rich peptides with enhanced bioavailability and inhibitory activity against hepatitis C virus.</title>
        <authorList>
            <person name="Hong W."/>
            <person name="Zhang R."/>
            <person name="Di Z."/>
            <person name="He Y."/>
            <person name="Zhao Z."/>
            <person name="Hu J."/>
            <person name="Wu Y."/>
            <person name="Li W."/>
            <person name="Cao Z."/>
        </authorList>
    </citation>
    <scope>NUCLEOTIDE SEQUENCE [MRNA]</scope>
    <scope>SYNTHESIS OF 24-33</scope>
    <source>
        <tissue>Venom gland</tissue>
    </source>
</reference>
<evidence type="ECO:0000250" key="1"/>
<evidence type="ECO:0000255" key="2"/>
<evidence type="ECO:0000303" key="3">
    <source>
    </source>
</evidence>
<evidence type="ECO:0000305" key="4"/>
<evidence type="ECO:0000305" key="5">
    <source>
    </source>
</evidence>
<name>NDB4V_CHATY</name>
<feature type="signal peptide" evidence="2">
    <location>
        <begin position="1"/>
        <end position="23"/>
    </location>
</feature>
<feature type="peptide" id="PRO_0000428699" description="Peptide Ctry2606">
    <location>
        <begin position="24"/>
        <end position="33"/>
    </location>
</feature>
<feature type="propeptide" id="PRO_0000428700" evidence="1">
    <location>
        <begin position="37"/>
        <end position="67"/>
    </location>
</feature>
<feature type="modified residue" description="Leucine amide" evidence="1">
    <location>
        <position position="33"/>
    </location>
</feature>
<organism>
    <name type="scientific">Chaerilus tryznai</name>
    <name type="common">Scorpion</name>
    <dbReference type="NCBI Taxonomy" id="1464547"/>
    <lineage>
        <taxon>Eukaryota</taxon>
        <taxon>Metazoa</taxon>
        <taxon>Ecdysozoa</taxon>
        <taxon>Arthropoda</taxon>
        <taxon>Chelicerata</taxon>
        <taxon>Arachnida</taxon>
        <taxon>Scorpiones</taxon>
        <taxon>Chaerilida</taxon>
        <taxon>Chaeriloidea</taxon>
        <taxon>Chaerilidae</taxon>
        <taxon>Chaerilus</taxon>
    </lineage>
</organism>
<protein>
    <recommendedName>
        <fullName evidence="3">Peptide Ctry2606</fullName>
    </recommendedName>
</protein>